<proteinExistence type="predicted"/>
<keyword id="KW-0614">Plasmid</keyword>
<keyword id="KW-1185">Reference proteome</keyword>
<evidence type="ECO:0000305" key="1"/>
<protein>
    <recommendedName>
        <fullName>Uncharacterized protein pXO2-10/BXB0009/GBAA_pXO2_0009</fullName>
    </recommendedName>
</protein>
<organism>
    <name type="scientific">Bacillus anthracis</name>
    <dbReference type="NCBI Taxonomy" id="1392"/>
    <lineage>
        <taxon>Bacteria</taxon>
        <taxon>Bacillati</taxon>
        <taxon>Bacillota</taxon>
        <taxon>Bacilli</taxon>
        <taxon>Bacillales</taxon>
        <taxon>Bacillaceae</taxon>
        <taxon>Bacillus</taxon>
        <taxon>Bacillus cereus group</taxon>
    </lineage>
</organism>
<feature type="chain" id="PRO_0000216831" description="Uncharacterized protein pXO2-10/BXB0009/GBAA_pXO2_0009">
    <location>
        <begin position="1"/>
        <end position="224"/>
    </location>
</feature>
<reference key="1">
    <citation type="journal article" date="1999" name="J. Appl. Microbiol.">
        <title>Sequence, assembly and analysis of pXO1 and pXO2.</title>
        <authorList>
            <person name="Okinaka R.T."/>
            <person name="Cloud K."/>
            <person name="Hampton O."/>
            <person name="Hoffmaster A."/>
            <person name="Hill K.K."/>
            <person name="Keim P."/>
            <person name="Koehler T."/>
            <person name="Lamke G."/>
            <person name="Kumano S."/>
            <person name="Manter D."/>
            <person name="Martinez Y."/>
            <person name="Ricke D."/>
            <person name="Svensson R."/>
            <person name="Jackson P.J."/>
        </authorList>
    </citation>
    <scope>NUCLEOTIDE SEQUENCE [GENOMIC DNA]</scope>
    <source>
        <strain>Pasteur</strain>
    </source>
</reference>
<reference key="2">
    <citation type="journal article" date="2002" name="Science">
        <title>Comparative genome sequencing for discovery of novel polymorphisms in Bacillus anthracis.</title>
        <authorList>
            <person name="Read T.D."/>
            <person name="Salzberg S.L."/>
            <person name="Pop M."/>
            <person name="Shumway M.F."/>
            <person name="Umayam L."/>
            <person name="Jiang L."/>
            <person name="Holtzapple E."/>
            <person name="Busch J.D."/>
            <person name="Smith K.L."/>
            <person name="Schupp J.M."/>
            <person name="Solomon D."/>
            <person name="Keim P."/>
            <person name="Fraser C.M."/>
        </authorList>
    </citation>
    <scope>NUCLEOTIDE SEQUENCE [GENOMIC DNA]</scope>
    <source>
        <strain>Ames / isolate Florida / A2012</strain>
    </source>
</reference>
<reference key="3">
    <citation type="journal article" date="2009" name="J. Bacteriol.">
        <title>The complete genome sequence of Bacillus anthracis Ames 'Ancestor'.</title>
        <authorList>
            <person name="Ravel J."/>
            <person name="Jiang L."/>
            <person name="Stanley S.T."/>
            <person name="Wilson M.R."/>
            <person name="Decker R.S."/>
            <person name="Read T.D."/>
            <person name="Worsham P."/>
            <person name="Keim P.S."/>
            <person name="Salzberg S.L."/>
            <person name="Fraser-Liggett C.M."/>
            <person name="Rasko D.A."/>
        </authorList>
    </citation>
    <scope>NUCLEOTIDE SEQUENCE [LARGE SCALE GENOMIC DNA]</scope>
    <source>
        <strain>Ames ancestor</strain>
    </source>
</reference>
<accession>Q9RN22</accession>
<accession>Q8KYG7</accession>
<sequence length="224" mass="26614">MKMKVATAEAKKVNRKRQIESEKSNGKQSFISTIFASFKNTDASIVDIAPYKRLEQKTGILVDHRNNLQVYLKVKTTDLLSMNQDDLKRFMNQLTSLCRVYHEPFKILSLTYSTETTEQQVYWKRMALRFQGRMSQEVSEKKEEHLWYQRYSLAIENLNRVLWVEKNLKELAFFIVVYGKNETELIKNVKDMKRYGGRQFNLQNMKAKEVEKLIFKLQNMNSEM</sequence>
<gene>
    <name type="ordered locus">pXO2-10</name>
    <name type="ordered locus">BXB0009</name>
    <name type="ordered locus">GBAA_pXO2_0009</name>
</gene>
<dbReference type="EMBL" id="AF188935">
    <property type="protein sequence ID" value="AAF13615.1"/>
    <property type="status" value="ALT_INIT"/>
    <property type="molecule type" value="Genomic_DNA"/>
</dbReference>
<dbReference type="EMBL" id="AE011191">
    <property type="protein sequence ID" value="AAM26170.1"/>
    <property type="molecule type" value="Genomic_DNA"/>
</dbReference>
<dbReference type="EMBL" id="AE017335">
    <property type="protein sequence ID" value="AAT28939.2"/>
    <property type="molecule type" value="Genomic_DNA"/>
</dbReference>
<dbReference type="RefSeq" id="NP_053165.1">
    <property type="nucleotide sequence ID" value="NC_002146.1"/>
</dbReference>
<dbReference type="TCDB" id="3.A.7.13.1">
    <property type="family name" value="the type iv (conjugal dna-protein transfer or virb) secretory pathway (ivsp) family"/>
</dbReference>
<dbReference type="KEGG" id="bar:GBAA_pXO2_0009"/>
<dbReference type="HOGENOM" id="CLU_1212859_0_0_9"/>
<dbReference type="Proteomes" id="UP000000594">
    <property type="component" value="Plasmid pXO2"/>
</dbReference>
<name>Y6509_BACAN</name>
<comment type="sequence caution" evidence="1">
    <conflict type="erroneous initiation">
        <sequence resource="EMBL-CDS" id="AAF13615"/>
    </conflict>
</comment>
<geneLocation type="plasmid">
    <name>pXO2</name>
</geneLocation>